<accession>P03261</accession>
<evidence type="ECO:0000255" key="1">
    <source>
        <dbReference type="HAMAP-Rule" id="MF_04055"/>
    </source>
</evidence>
<evidence type="ECO:0000256" key="2">
    <source>
        <dbReference type="SAM" id="MobiDB-lite"/>
    </source>
</evidence>
<evidence type="ECO:0000269" key="3">
    <source>
    </source>
</evidence>
<evidence type="ECO:0000269" key="4">
    <source>
    </source>
</evidence>
<evidence type="ECO:0000269" key="5">
    <source>
    </source>
</evidence>
<evidence type="ECO:0000305" key="6"/>
<organismHost>
    <name type="scientific">Homo sapiens</name>
    <name type="common">Human</name>
    <dbReference type="NCBI Taxonomy" id="9606"/>
</organismHost>
<proteinExistence type="evidence at protein level"/>
<dbReference type="EC" id="2.7.7.7" evidence="1 4"/>
<dbReference type="EMBL" id="J01917">
    <property type="protein sequence ID" value="AAA92206.1"/>
    <property type="status" value="ALT_INIT"/>
    <property type="molecule type" value="Genomic_DNA"/>
</dbReference>
<dbReference type="PIR" id="A92351">
    <property type="entry name" value="WMAD12"/>
</dbReference>
<dbReference type="RefSeq" id="AP_000166.1">
    <property type="nucleotide sequence ID" value="AC_000007.1"/>
</dbReference>
<dbReference type="IntAct" id="P03261">
    <property type="interactions" value="1"/>
</dbReference>
<dbReference type="MINT" id="P03261"/>
<dbReference type="KEGG" id="vg:2652985"/>
<dbReference type="Proteomes" id="UP000008167">
    <property type="component" value="Segment"/>
</dbReference>
<dbReference type="GO" id="GO:0042025">
    <property type="term" value="C:host cell nucleus"/>
    <property type="evidence" value="ECO:0007669"/>
    <property type="project" value="UniProtKB-SubCell"/>
</dbReference>
<dbReference type="GO" id="GO:0008408">
    <property type="term" value="F:3'-5' exonuclease activity"/>
    <property type="evidence" value="ECO:0007669"/>
    <property type="project" value="UniProtKB-UniRule"/>
</dbReference>
<dbReference type="GO" id="GO:0003677">
    <property type="term" value="F:DNA binding"/>
    <property type="evidence" value="ECO:0007669"/>
    <property type="project" value="UniProtKB-UniRule"/>
</dbReference>
<dbReference type="GO" id="GO:0003887">
    <property type="term" value="F:DNA-directed DNA polymerase activity"/>
    <property type="evidence" value="ECO:0000314"/>
    <property type="project" value="UniProtKB"/>
</dbReference>
<dbReference type="GO" id="GO:0000166">
    <property type="term" value="F:nucleotide binding"/>
    <property type="evidence" value="ECO:0007669"/>
    <property type="project" value="UniProtKB-UniRule"/>
</dbReference>
<dbReference type="GO" id="GO:0006261">
    <property type="term" value="P:DNA-templated DNA replication"/>
    <property type="evidence" value="ECO:0007669"/>
    <property type="project" value="UniProtKB-UniRule"/>
</dbReference>
<dbReference type="GO" id="GO:0039687">
    <property type="term" value="P:viral DNA strand displacement replication"/>
    <property type="evidence" value="ECO:0000314"/>
    <property type="project" value="UniProtKB"/>
</dbReference>
<dbReference type="Gene3D" id="1.10.287.690">
    <property type="entry name" value="Helix hairpin bin"/>
    <property type="match status" value="1"/>
</dbReference>
<dbReference type="Gene3D" id="3.90.1600.10">
    <property type="entry name" value="Palm domain of DNA polymerase"/>
    <property type="match status" value="1"/>
</dbReference>
<dbReference type="Gene3D" id="3.30.1770.10">
    <property type="entry name" value="TPR 1 domain of DNA polymerase"/>
    <property type="match status" value="1"/>
</dbReference>
<dbReference type="HAMAP" id="MF_04055">
    <property type="entry name" value="ADV_DPOL"/>
    <property type="match status" value="1"/>
</dbReference>
<dbReference type="InterPro" id="IPR006172">
    <property type="entry name" value="DNA-dir_DNA_pol_B"/>
</dbReference>
<dbReference type="InterPro" id="IPR014382">
    <property type="entry name" value="DNA-dir_DNA_pol_B_adenovir"/>
</dbReference>
<dbReference type="InterPro" id="IPR017964">
    <property type="entry name" value="DNA-dir_DNA_pol_B_CS"/>
</dbReference>
<dbReference type="InterPro" id="IPR004868">
    <property type="entry name" value="DNA-dir_DNA_pol_B_mt/vir"/>
</dbReference>
<dbReference type="InterPro" id="IPR043502">
    <property type="entry name" value="DNA/RNA_pol_sf"/>
</dbReference>
<dbReference type="InterPro" id="IPR023211">
    <property type="entry name" value="DNA_pol_palm_dom_sf"/>
</dbReference>
<dbReference type="InterPro" id="IPR012337">
    <property type="entry name" value="RNaseH-like_sf"/>
</dbReference>
<dbReference type="Pfam" id="PF03175">
    <property type="entry name" value="DNA_pol_B_2"/>
    <property type="match status" value="1"/>
</dbReference>
<dbReference type="PIRSF" id="PIRSF000788">
    <property type="entry name" value="DPol_ADV"/>
    <property type="match status" value="1"/>
</dbReference>
<dbReference type="PRINTS" id="PR00106">
    <property type="entry name" value="DNAPOLB"/>
</dbReference>
<dbReference type="SMART" id="SM00486">
    <property type="entry name" value="POLBc"/>
    <property type="match status" value="1"/>
</dbReference>
<dbReference type="SUPFAM" id="SSF56672">
    <property type="entry name" value="DNA/RNA polymerases"/>
    <property type="match status" value="1"/>
</dbReference>
<dbReference type="SUPFAM" id="SSF53098">
    <property type="entry name" value="Ribonuclease H-like"/>
    <property type="match status" value="1"/>
</dbReference>
<dbReference type="PROSITE" id="PS00116">
    <property type="entry name" value="DNA_POLYMERASE_B"/>
    <property type="match status" value="1"/>
</dbReference>
<sequence>MALVQAHRARRLHAEAPDSGDQPPRRRVRQQPPRAAPAPARARRRRAPAPSPGGSRAPPTSGGPPASPLLDASSKDTPAAHRPPRGTVVAPRGCGLLQVIDAATNQPLEIRYHLDLARALTRLCEVNLQELPPDLSPRELQTMDSSHLRDVVIKLRPPRADIWTLGSRGVVVRSTITPLEQPDGQGQAAEVEDHQPNPPGEGLKFPLCFLVRGRQVNLVQDVQPVHRCQYCARFYKSQHECSARRRDFYFHHINSHSSNWWREIQFFPIGSHPRTERLFVTYDVETYTWMGAFGKQLVPFMLVMKFGGDEPLVTAARDLAVDLGWDRWEQDPLTFYCITPEKMAIGRQFRTFRDHLQMLMARDLWSSFVASNPHLADWALSEHGLSSPEELTYEELKKLPSIKGTPRFLELYIVGHNINGFDEIVLAAQVINNRSEVPGPFRITRNFMPRAGKILFNDVTFALPNPRSKKRTDFLLWEQGGCDDTDFKYQYLKVMVRDTFALTHTSLRKAAQAYALPVEKGCCAYQAVNQFYMLGSYRSEADGFPIQEYWKDREEFVLNRELWKKKGQDKYDIIKETLDYCALDVQVTAELVNKLRDSYASFVRDAVGLTDASFNVFQRPTISSNSHAIFRQIVFRAEQPARSNLGPDLLAPSHELYDYVRASIRGGRCYPTYLGILREPLYVYDICGMYASALTHPMPWGPPLNPYERALAARAWQQALDLQGCKIDYFDARLLPGVFTVDADPPDETQLDPLPPFCSRKGGRLCWTNERLRGEVATSVDLVTLHNRGWRVHLVPDERTTVFPEWRCVAREYVQLNIAAKERADRDKNQTLRSIAKLLSNALYGSFATKLDNKKIVFSDQMDAATLKGITAGQVNIKSSSFLETDNLSAEVMPAFEREYSPQQLALADSDAEESEDERAPTPFYSPPSGTPGHVAYTYKPITFLDAEEGDMCLHTLERVDPLVDNDRYPSHLASFVLAWTRAFVSEWSEFLYEEDRGTPLEDRPLKSVYGDTDSLFVTERGHRLMETRGKKRIKKHGGNLVFDPERPELTWLVECETVCGACGADAYSPESVFLAPKLYALKSLHCPSCGASSKGKLRAKGHAAEGLDYDTMVKCYLADAQGEDRQRFSTSRTSLKRTLASAQPGAHPFTVTQTTLTRTLRPWKDMTLARLDEHRLLPYSESRPNPRNEEICWIEMP</sequence>
<protein>
    <recommendedName>
        <fullName evidence="1">DNA polymerase</fullName>
        <ecNumber evidence="1 4">2.7.7.7</ecNumber>
    </recommendedName>
</protein>
<comment type="function">
    <text evidence="1 3">Eukaryotic-type DNA polymerase involved in viral genomic replication. DNA synthesis is protein primed, and acts in a strand displacement replication. Assembles in complex with viral pTP, DBP, host NFIA and host POU2F1/OCT1 on viral origin of replication. The polymerase covalently transfers dCMP onto pTP, thereby initiating complementary strand synthesis.</text>
</comment>
<comment type="catalytic activity">
    <reaction evidence="1 4">
        <text>DNA(n) + a 2'-deoxyribonucleoside 5'-triphosphate = DNA(n+1) + diphosphate</text>
        <dbReference type="Rhea" id="RHEA:22508"/>
        <dbReference type="Rhea" id="RHEA-COMP:17339"/>
        <dbReference type="Rhea" id="RHEA-COMP:17340"/>
        <dbReference type="ChEBI" id="CHEBI:33019"/>
        <dbReference type="ChEBI" id="CHEBI:61560"/>
        <dbReference type="ChEBI" id="CHEBI:173112"/>
        <dbReference type="EC" id="2.7.7.7"/>
    </reaction>
</comment>
<comment type="subunit">
    <text evidence="1 5">Heterodimer with the terminal protein; this heterodimer binds to bp 9 to 18 of the genome (By similarity) (PubMed:8985382). Forms a complex with viral pTP, DBP and hosts NFIA and POU2F1/OCT1 for initiation of replication (By similarity).</text>
</comment>
<comment type="subcellular location">
    <subcellularLocation>
        <location evidence="1">Host nucleus</location>
    </subcellularLocation>
</comment>
<comment type="miscellaneous">
    <text evidence="1">This DNA polymerase requires a protein as a primer.</text>
</comment>
<comment type="similarity">
    <text evidence="1">Belongs to the DNA polymerase type-B family.</text>
</comment>
<comment type="sequence caution" evidence="6">
    <conflict type="erroneous initiation">
        <sequence resource="EMBL-CDS" id="AAA92206"/>
    </conflict>
    <text>Truncated N-terminus.</text>
</comment>
<name>DPOL_ADE02</name>
<feature type="chain" id="PRO_0000046492" description="DNA polymerase">
    <location>
        <begin position="1"/>
        <end position="1198"/>
    </location>
</feature>
<feature type="region of interest" description="Disordered" evidence="2">
    <location>
        <begin position="1"/>
        <end position="90"/>
    </location>
</feature>
<feature type="region of interest" description="Disordered" evidence="2">
    <location>
        <begin position="179"/>
        <end position="198"/>
    </location>
</feature>
<feature type="region of interest" description="Disordered" evidence="2">
    <location>
        <begin position="906"/>
        <end position="931"/>
    </location>
</feature>
<feature type="compositionally biased region" description="Low complexity" evidence="2">
    <location>
        <begin position="30"/>
        <end position="40"/>
    </location>
</feature>
<keyword id="KW-0235">DNA replication</keyword>
<keyword id="KW-0238">DNA-binding</keyword>
<keyword id="KW-0239">DNA-directed DNA polymerase</keyword>
<keyword id="KW-1048">Host nucleus</keyword>
<keyword id="KW-0548">Nucleotidyltransferase</keyword>
<keyword id="KW-1185">Reference proteome</keyword>
<keyword id="KW-0808">Transferase</keyword>
<keyword id="KW-1194">Viral DNA replication</keyword>
<organism>
    <name type="scientific">Human adenovirus C serotype 2</name>
    <name type="common">HAdV-2</name>
    <name type="synonym">Human adenovirus 2</name>
    <dbReference type="NCBI Taxonomy" id="10515"/>
    <lineage>
        <taxon>Viruses</taxon>
        <taxon>Varidnaviria</taxon>
        <taxon>Bamfordvirae</taxon>
        <taxon>Preplasmiviricota</taxon>
        <taxon>Tectiliviricetes</taxon>
        <taxon>Rowavirales</taxon>
        <taxon>Adenoviridae</taxon>
        <taxon>Mastadenovirus</taxon>
        <taxon>Human mastadenovirus C</taxon>
    </lineage>
</organism>
<gene>
    <name evidence="1" type="primary">POL</name>
</gene>
<reference key="1">
    <citation type="journal article" date="1982" name="J. Biol. Chem.">
        <title>Nucleotide sequences from the adenovirus-2 genome.</title>
        <authorList>
            <person name="Gingeras T.R."/>
            <person name="Sciaky D."/>
            <person name="Gelinas R.E."/>
            <person name="Bing-Dong J."/>
            <person name="Yen C.E."/>
            <person name="Kelly M.M."/>
            <person name="Bullock P.A."/>
            <person name="Parsons B.L."/>
            <person name="O'Neill K.E."/>
            <person name="Roberts R.J."/>
        </authorList>
    </citation>
    <scope>NUCLEOTIDE SEQUENCE [GENOMIC DNA]</scope>
</reference>
<reference key="2">
    <citation type="journal article" date="1982" name="J. Biol. Chem.">
        <title>DNA sequence analysis of the region encoding the terminal protein and the hypothetical N-gene product of adenovirus type 2.</title>
        <authorList>
            <person name="Alestroem P."/>
            <person name="Akusjaervi G."/>
            <person name="Pettersson M."/>
            <person name="Pettersson U."/>
        </authorList>
    </citation>
    <scope>NUCLEOTIDE SEQUENCE [GENOMIC DNA]</scope>
</reference>
<reference key="3">
    <citation type="journal article" date="1984" name="J. Biol. Chem.">
        <title>Properties of the adenovirus DNA polymerase.</title>
        <authorList>
            <person name="Field J."/>
            <person name="Gronostajski R.M."/>
            <person name="Hurwitz J."/>
        </authorList>
    </citation>
    <scope>CATALYTIC ACTIVITY</scope>
</reference>
<reference key="4">
    <citation type="journal article" date="1997" name="J. Virol.">
        <title>Domain organization of the adenovirus preterminal protein.</title>
        <authorList>
            <person name="Webster A."/>
            <person name="Leith I.R."/>
            <person name="Hay R.T."/>
        </authorList>
    </citation>
    <scope>INTERACTION WITH THE TERMINAL PROTEIN</scope>
</reference>
<reference key="5">
    <citation type="journal article" date="2001" name="J. Biol. Chem.">
        <title>The (I/Y)XGG motif of adenovirus DNA polymerase affects template DNA binding and the transition from initiation to elongation.</title>
        <authorList>
            <person name="Brenkman A.B."/>
            <person name="Heideman M.R."/>
            <person name="Truniger V."/>
            <person name="Salas M."/>
            <person name="van der Vliet P.C."/>
        </authorList>
    </citation>
    <scope>MOTIF</scope>
</reference>
<reference key="6">
    <citation type="journal article" date="2002" name="J. Virol.">
        <title>Molecular architecture of adenovirus DNA polymerase and location of the protein primer.</title>
        <authorList>
            <person name="Brenkman A.B."/>
            <person name="Breure E.C."/>
            <person name="van der Vliet P.C."/>
        </authorList>
    </citation>
    <scope>FUNCTION</scope>
    <scope>DNA-BINDING</scope>
</reference>